<dbReference type="EMBL" id="CP000939">
    <property type="protein sequence ID" value="ACA45671.1"/>
    <property type="molecule type" value="Genomic_DNA"/>
</dbReference>
<dbReference type="RefSeq" id="WP_003358099.1">
    <property type="nucleotide sequence ID" value="NC_010516.1"/>
</dbReference>
<dbReference type="SMR" id="B1ILZ5"/>
<dbReference type="GeneID" id="5187008"/>
<dbReference type="KEGG" id="cbb:CLD_1548"/>
<dbReference type="HOGENOM" id="CLU_137929_1_0_9"/>
<dbReference type="Proteomes" id="UP000008541">
    <property type="component" value="Chromosome"/>
</dbReference>
<dbReference type="GO" id="GO:0051301">
    <property type="term" value="P:cell division"/>
    <property type="evidence" value="ECO:0007669"/>
    <property type="project" value="UniProtKB-KW"/>
</dbReference>
<dbReference type="GO" id="GO:0032955">
    <property type="term" value="P:regulation of division septum assembly"/>
    <property type="evidence" value="ECO:0007669"/>
    <property type="project" value="InterPro"/>
</dbReference>
<dbReference type="FunFam" id="3.30.1070.10:FF:000003">
    <property type="entry name" value="Cell division topological specificity factor"/>
    <property type="match status" value="1"/>
</dbReference>
<dbReference type="Gene3D" id="3.30.1070.10">
    <property type="entry name" value="Cell division topological specificity factor MinE"/>
    <property type="match status" value="1"/>
</dbReference>
<dbReference type="HAMAP" id="MF_00262">
    <property type="entry name" value="MinE"/>
    <property type="match status" value="1"/>
</dbReference>
<dbReference type="InterPro" id="IPR005527">
    <property type="entry name" value="MinE"/>
</dbReference>
<dbReference type="InterPro" id="IPR036707">
    <property type="entry name" value="MinE_sf"/>
</dbReference>
<dbReference type="NCBIfam" id="TIGR01215">
    <property type="entry name" value="minE"/>
    <property type="match status" value="1"/>
</dbReference>
<dbReference type="NCBIfam" id="NF001422">
    <property type="entry name" value="PRK00296.1"/>
    <property type="match status" value="1"/>
</dbReference>
<dbReference type="Pfam" id="PF03776">
    <property type="entry name" value="MinE"/>
    <property type="match status" value="1"/>
</dbReference>
<dbReference type="SUPFAM" id="SSF55229">
    <property type="entry name" value="Cell division protein MinE topological specificity domain"/>
    <property type="match status" value="1"/>
</dbReference>
<comment type="function">
    <text evidence="1">Prevents the cell division inhibition by proteins MinC and MinD at internal division sites while permitting inhibition at polar sites. This ensures cell division at the proper site by restricting the formation of a division septum at the midpoint of the long axis of the cell.</text>
</comment>
<comment type="similarity">
    <text evidence="1">Belongs to the MinE family.</text>
</comment>
<keyword id="KW-0131">Cell cycle</keyword>
<keyword id="KW-0132">Cell division</keyword>
<proteinExistence type="inferred from homology"/>
<protein>
    <recommendedName>
        <fullName evidence="1">Cell division topological specificity factor</fullName>
    </recommendedName>
</protein>
<feature type="chain" id="PRO_1000114213" description="Cell division topological specificity factor">
    <location>
        <begin position="1"/>
        <end position="87"/>
    </location>
</feature>
<organism>
    <name type="scientific">Clostridium botulinum (strain Okra / Type B1)</name>
    <dbReference type="NCBI Taxonomy" id="498213"/>
    <lineage>
        <taxon>Bacteria</taxon>
        <taxon>Bacillati</taxon>
        <taxon>Bacillota</taxon>
        <taxon>Clostridia</taxon>
        <taxon>Eubacteriales</taxon>
        <taxon>Clostridiaceae</taxon>
        <taxon>Clostridium</taxon>
    </lineage>
</organism>
<reference key="1">
    <citation type="journal article" date="2007" name="PLoS ONE">
        <title>Analysis of the neurotoxin complex genes in Clostridium botulinum A1-A4 and B1 strains: BoNT/A3, /Ba4 and /B1 clusters are located within plasmids.</title>
        <authorList>
            <person name="Smith T.J."/>
            <person name="Hill K.K."/>
            <person name="Foley B.T."/>
            <person name="Detter J.C."/>
            <person name="Munk A.C."/>
            <person name="Bruce D.C."/>
            <person name="Doggett N.A."/>
            <person name="Smith L.A."/>
            <person name="Marks J.D."/>
            <person name="Xie G."/>
            <person name="Brettin T.S."/>
        </authorList>
    </citation>
    <scope>NUCLEOTIDE SEQUENCE [LARGE SCALE GENOMIC DNA]</scope>
    <source>
        <strain>Okra / Type B1</strain>
    </source>
</reference>
<sequence length="87" mass="10027">MDLFKFFSKQSSKDVAKERLKLILIQDRNSISPDVLESIREDMLKVISKYIEIDNEDVDIKMSSVEEIEGMSPALIASIPIKRIKKK</sequence>
<name>MINE_CLOBK</name>
<evidence type="ECO:0000255" key="1">
    <source>
        <dbReference type="HAMAP-Rule" id="MF_00262"/>
    </source>
</evidence>
<accession>B1ILZ5</accession>
<gene>
    <name evidence="1" type="primary">minE</name>
    <name type="ordered locus">CLD_1548</name>
</gene>